<dbReference type="EMBL" id="AY263708">
    <property type="protein sequence ID" value="AAP33075.1"/>
    <property type="molecule type" value="mRNA"/>
</dbReference>
<dbReference type="PDB" id="1QK7">
    <property type="method" value="NMR"/>
    <property type="chains" value="A=50-81"/>
</dbReference>
<dbReference type="PDBsum" id="1QK7"/>
<dbReference type="SMR" id="Q86C51"/>
<dbReference type="UniLectin" id="Q86C51"/>
<dbReference type="ArachnoServer" id="AS000355">
    <property type="toxin name" value="U5-theraphotoxin-Hs1a"/>
</dbReference>
<dbReference type="EvolutionaryTrace" id="Q86C51"/>
<dbReference type="GO" id="GO:0005576">
    <property type="term" value="C:extracellular region"/>
    <property type="evidence" value="ECO:0007669"/>
    <property type="project" value="UniProtKB-SubCell"/>
</dbReference>
<dbReference type="GO" id="GO:0030246">
    <property type="term" value="F:carbohydrate binding"/>
    <property type="evidence" value="ECO:0007669"/>
    <property type="project" value="UniProtKB-KW"/>
</dbReference>
<dbReference type="GO" id="GO:0008200">
    <property type="term" value="F:ion channel inhibitor activity"/>
    <property type="evidence" value="ECO:0007669"/>
    <property type="project" value="InterPro"/>
</dbReference>
<dbReference type="GO" id="GO:0090729">
    <property type="term" value="F:toxin activity"/>
    <property type="evidence" value="ECO:0007669"/>
    <property type="project" value="UniProtKB-KW"/>
</dbReference>
<dbReference type="InterPro" id="IPR011696">
    <property type="entry name" value="Huwentoxin-1"/>
</dbReference>
<dbReference type="InterPro" id="IPR013140">
    <property type="entry name" value="Huwentoxin_CS1"/>
</dbReference>
<dbReference type="Pfam" id="PF07740">
    <property type="entry name" value="Toxin_12"/>
    <property type="match status" value="1"/>
</dbReference>
<dbReference type="SUPFAM" id="SSF57059">
    <property type="entry name" value="omega toxin-like"/>
    <property type="match status" value="1"/>
</dbReference>
<dbReference type="PROSITE" id="PS60021">
    <property type="entry name" value="HWTX_1"/>
    <property type="match status" value="1"/>
</dbReference>
<name>TXLA1_CYRSC</name>
<organism>
    <name type="scientific">Cyriopagopus schmidti</name>
    <name type="common">Chinese bird spider</name>
    <name type="synonym">Haplopelma schmidti</name>
    <dbReference type="NCBI Taxonomy" id="29017"/>
    <lineage>
        <taxon>Eukaryota</taxon>
        <taxon>Metazoa</taxon>
        <taxon>Ecdysozoa</taxon>
        <taxon>Arthropoda</taxon>
        <taxon>Chelicerata</taxon>
        <taxon>Arachnida</taxon>
        <taxon>Araneae</taxon>
        <taxon>Mygalomorphae</taxon>
        <taxon>Theraphosidae</taxon>
        <taxon>Cyriopagopus</taxon>
    </lineage>
</organism>
<feature type="signal peptide" evidence="1">
    <location>
        <begin position="1"/>
        <end position="21"/>
    </location>
</feature>
<feature type="propeptide" id="PRO_0000035562" evidence="4">
    <location>
        <begin position="22"/>
        <end position="49"/>
    </location>
</feature>
<feature type="chain" id="PRO_0000035563" description="U5-theraphotoxin-Hs1a 1">
    <location>
        <begin position="50"/>
        <end position="81"/>
    </location>
</feature>
<feature type="disulfide bond" evidence="2 3 6">
    <location>
        <begin position="51"/>
        <end position="63"/>
    </location>
</feature>
<feature type="disulfide bond" evidence="2 3 6">
    <location>
        <begin position="56"/>
        <end position="68"/>
    </location>
</feature>
<feature type="disulfide bond" evidence="2 3 6">
    <location>
        <begin position="62"/>
        <end position="75"/>
    </location>
</feature>
<feature type="strand" evidence="7">
    <location>
        <begin position="57"/>
        <end position="59"/>
    </location>
</feature>
<feature type="strand" evidence="7">
    <location>
        <begin position="66"/>
        <end position="68"/>
    </location>
</feature>
<feature type="strand" evidence="7">
    <location>
        <begin position="70"/>
        <end position="72"/>
    </location>
</feature>
<feature type="strand" evidence="7">
    <location>
        <begin position="74"/>
        <end position="77"/>
    </location>
</feature>
<protein>
    <recommendedName>
        <fullName>U5-theraphotoxin-Hs1a 1</fullName>
        <shortName>U5-TRTX-Hs1a</shortName>
    </recommendedName>
    <alternativeName>
        <fullName>Huwenlectin-1</fullName>
    </alternativeName>
    <alternativeName>
        <fullName>Huwenlectin-I</fullName>
    </alternativeName>
    <alternativeName>
        <fullName>SHLP-I</fullName>
        <shortName>SHL-I</shortName>
    </alternativeName>
</protein>
<evidence type="ECO:0000255" key="1"/>
<evidence type="ECO:0000269" key="2">
    <source>
    </source>
</evidence>
<evidence type="ECO:0000269" key="3">
    <source>
    </source>
</evidence>
<evidence type="ECO:0000269" key="4">
    <source>
    </source>
</evidence>
<evidence type="ECO:0000305" key="5"/>
<evidence type="ECO:0000312" key="6">
    <source>
        <dbReference type="PDB" id="1QK7"/>
    </source>
</evidence>
<evidence type="ECO:0007829" key="7">
    <source>
        <dbReference type="PDB" id="1QK7"/>
    </source>
</evidence>
<keyword id="KW-0002">3D-structure</keyword>
<keyword id="KW-0165">Cleavage on pair of basic residues</keyword>
<keyword id="KW-0903">Direct protein sequencing</keyword>
<keyword id="KW-1015">Disulfide bond</keyword>
<keyword id="KW-0960">Knottin</keyword>
<keyword id="KW-0430">Lectin</keyword>
<keyword id="KW-0964">Secreted</keyword>
<keyword id="KW-0732">Signal</keyword>
<keyword id="KW-0800">Toxin</keyword>
<reference key="1">
    <citation type="journal article" date="2003" name="Toxicon">
        <title>cDNA sequence analysis of seven peptide toxins from the spider Selenocosmia huwena.</title>
        <authorList>
            <person name="Diao J."/>
            <person name="Lin Y."/>
            <person name="Tang J."/>
            <person name="Liang S.-P."/>
        </authorList>
    </citation>
    <scope>NUCLEOTIDE SEQUENCE [MRNA]</scope>
    <source>
        <tissue>Venom gland</tissue>
    </source>
</reference>
<reference key="2">
    <citation type="journal article" date="1995" name="Toxicon">
        <title>A lectin-like peptide isolated from the venom of the Chinese bird spider Selenocosmia huwena.</title>
        <authorList>
            <person name="Liang S.-P."/>
            <person name="Pan X."/>
        </authorList>
    </citation>
    <scope>PROTEIN SEQUENCE OF 50-81</scope>
    <scope>FUNCTION</scope>
    <source>
        <tissue>Venom</tissue>
    </source>
</reference>
<reference key="3">
    <citation type="journal article" date="1999" name="Peptides">
        <title>Assignment of the three disulfide bonds of Selenocosmia huwena lectin-I from the venom of spider Selenocosmia huwena.</title>
        <authorList>
            <person name="Li F."/>
            <person name="Liang S.-P."/>
        </authorList>
    </citation>
    <scope>DISULFIDE BONDS</scope>
    <scope>MASS SPECTROMETRY</scope>
</reference>
<reference key="4">
    <citation type="journal article" date="1999" name="J. Protein Chem.">
        <title>Three-dimensional structure of Selenocosmia huwena lectin-I (SHL-I) from the venom of the spider Selenocosmia huwena by 2D-NMR.</title>
        <authorList>
            <person name="Lu S.-Y."/>
            <person name="Liang S.-P."/>
            <person name="Gu X.-C."/>
        </authorList>
    </citation>
    <scope>STRUCTURE BY NMR OF 50-81</scope>
    <scope>DISULFIDE BOND</scope>
    <source>
        <tissue>Venom</tissue>
    </source>
</reference>
<accession>Q86C51</accession>
<comment type="function">
    <text evidence="4">Agglutinates human and mice erythrocytes. This activity can be specifically inhibited by mannosamine. This lectin shows very low toxicity in both mammals and insects.</text>
</comment>
<comment type="subcellular location">
    <subcellularLocation>
        <location>Secreted</location>
    </subcellularLocation>
</comment>
<comment type="tissue specificity">
    <text>Expressed by the venom gland.</text>
</comment>
<comment type="domain">
    <text>The presence of a 'disulfide through disulfide knot' structurally defines this protein as a knottin.</text>
</comment>
<comment type="mass spectrometry"/>
<comment type="miscellaneous">
    <text>Exists in two forms, due to cis-trans isomerization at Gly-79-Pro-80. The trans isomer is the most abundant (75%).</text>
</comment>
<comment type="similarity">
    <text evidence="5">Belongs to the neurotoxin 10 (Hwtx-1) family. 51 (Hntx-8) subfamily. Hntx-8 sub-subfamily.</text>
</comment>
<proteinExistence type="evidence at protein level"/>
<sequence>MKTSMFLTLTGLGLLFVVCYASESEEKEFPKELLSSIFAADSDFKVEERGCLGDKCDYNNGCCSGYVCSRTWKWCVLAGPWRR</sequence>